<organism>
    <name type="scientific">Helicobacter pylori (strain ATCC 700392 / 26695)</name>
    <name type="common">Campylobacter pylori</name>
    <dbReference type="NCBI Taxonomy" id="85962"/>
    <lineage>
        <taxon>Bacteria</taxon>
        <taxon>Pseudomonadati</taxon>
        <taxon>Campylobacterota</taxon>
        <taxon>Epsilonproteobacteria</taxon>
        <taxon>Campylobacterales</taxon>
        <taxon>Helicobacteraceae</taxon>
        <taxon>Helicobacter</taxon>
    </lineage>
</organism>
<reference key="1">
    <citation type="journal article" date="1997" name="Nature">
        <title>The complete genome sequence of the gastric pathogen Helicobacter pylori.</title>
        <authorList>
            <person name="Tomb J.-F."/>
            <person name="White O."/>
            <person name="Kerlavage A.R."/>
            <person name="Clayton R.A."/>
            <person name="Sutton G.G."/>
            <person name="Fleischmann R.D."/>
            <person name="Ketchum K.A."/>
            <person name="Klenk H.-P."/>
            <person name="Gill S.R."/>
            <person name="Dougherty B.A."/>
            <person name="Nelson K.E."/>
            <person name="Quackenbush J."/>
            <person name="Zhou L."/>
            <person name="Kirkness E.F."/>
            <person name="Peterson S.N."/>
            <person name="Loftus B.J."/>
            <person name="Richardson D.L."/>
            <person name="Dodson R.J."/>
            <person name="Khalak H.G."/>
            <person name="Glodek A."/>
            <person name="McKenney K."/>
            <person name="FitzGerald L.M."/>
            <person name="Lee N."/>
            <person name="Adams M.D."/>
            <person name="Hickey E.K."/>
            <person name="Berg D.E."/>
            <person name="Gocayne J.D."/>
            <person name="Utterback T.R."/>
            <person name="Peterson J.D."/>
            <person name="Kelley J.M."/>
            <person name="Cotton M.D."/>
            <person name="Weidman J.F."/>
            <person name="Fujii C."/>
            <person name="Bowman C."/>
            <person name="Watthey L."/>
            <person name="Wallin E."/>
            <person name="Hayes W.S."/>
            <person name="Borodovsky M."/>
            <person name="Karp P.D."/>
            <person name="Smith H.O."/>
            <person name="Fraser C.M."/>
            <person name="Venter J.C."/>
        </authorList>
    </citation>
    <scope>NUCLEOTIDE SEQUENCE [LARGE SCALE GENOMIC DNA]</scope>
    <source>
        <strain>ATCC 700392 / 26695</strain>
    </source>
</reference>
<comment type="function">
    <text evidence="1">Catalyzes the reversible transfer of the terminal phosphate of ATP to form a long-chain polyphosphate (polyP).</text>
</comment>
<comment type="catalytic activity">
    <reaction evidence="1">
        <text>[phosphate](n) + ATP = [phosphate](n+1) + ADP</text>
        <dbReference type="Rhea" id="RHEA:19573"/>
        <dbReference type="Rhea" id="RHEA-COMP:9859"/>
        <dbReference type="Rhea" id="RHEA-COMP:14280"/>
        <dbReference type="ChEBI" id="CHEBI:16838"/>
        <dbReference type="ChEBI" id="CHEBI:30616"/>
        <dbReference type="ChEBI" id="CHEBI:456216"/>
        <dbReference type="EC" id="2.7.4.1"/>
    </reaction>
</comment>
<comment type="cofactor">
    <cofactor evidence="1">
        <name>Mg(2+)</name>
        <dbReference type="ChEBI" id="CHEBI:18420"/>
    </cofactor>
</comment>
<comment type="PTM">
    <text evidence="1">An intermediate of this reaction is the autophosphorylated ppk in which a phosphate is covalently linked to a histidine residue through a N-P bond.</text>
</comment>
<comment type="similarity">
    <text evidence="1">Belongs to the polyphosphate kinase 1 (PPK1) family.</text>
</comment>
<proteinExistence type="inferred from homology"/>
<feature type="chain" id="PRO_0000128643" description="Polyphosphate kinase">
    <location>
        <begin position="1"/>
        <end position="675"/>
    </location>
</feature>
<feature type="active site" description="Phosphohistidine intermediate" evidence="1">
    <location>
        <position position="431"/>
    </location>
</feature>
<feature type="binding site" evidence="1">
    <location>
        <position position="42"/>
    </location>
    <ligand>
        <name>ATP</name>
        <dbReference type="ChEBI" id="CHEBI:30616"/>
    </ligand>
</feature>
<feature type="binding site" evidence="1">
    <location>
        <position position="372"/>
    </location>
    <ligand>
        <name>Mg(2+)</name>
        <dbReference type="ChEBI" id="CHEBI:18420"/>
    </ligand>
</feature>
<feature type="binding site" evidence="1">
    <location>
        <position position="401"/>
    </location>
    <ligand>
        <name>Mg(2+)</name>
        <dbReference type="ChEBI" id="CHEBI:18420"/>
    </ligand>
</feature>
<feature type="binding site" evidence="1">
    <location>
        <position position="464"/>
    </location>
    <ligand>
        <name>ATP</name>
        <dbReference type="ChEBI" id="CHEBI:30616"/>
    </ligand>
</feature>
<feature type="binding site" evidence="1">
    <location>
        <position position="558"/>
    </location>
    <ligand>
        <name>ATP</name>
        <dbReference type="ChEBI" id="CHEBI:30616"/>
    </ligand>
</feature>
<feature type="binding site" evidence="1">
    <location>
        <position position="586"/>
    </location>
    <ligand>
        <name>ATP</name>
        <dbReference type="ChEBI" id="CHEBI:30616"/>
    </ligand>
</feature>
<name>PPK1_HELPY</name>
<protein>
    <recommendedName>
        <fullName evidence="1">Polyphosphate kinase</fullName>
        <ecNumber evidence="1">2.7.4.1</ecNumber>
    </recommendedName>
    <alternativeName>
        <fullName evidence="1">ATP-polyphosphate phosphotransferase</fullName>
    </alternativeName>
    <alternativeName>
        <fullName evidence="1">Polyphosphoric acid kinase</fullName>
    </alternativeName>
</protein>
<gene>
    <name evidence="1" type="primary">ppk</name>
    <name type="ordered locus">HP_1010</name>
</gene>
<accession>O25654</accession>
<keyword id="KW-0067">ATP-binding</keyword>
<keyword id="KW-0418">Kinase</keyword>
<keyword id="KW-0460">Magnesium</keyword>
<keyword id="KW-0479">Metal-binding</keyword>
<keyword id="KW-0547">Nucleotide-binding</keyword>
<keyword id="KW-0597">Phosphoprotein</keyword>
<keyword id="KW-1185">Reference proteome</keyword>
<keyword id="KW-0808">Transferase</keyword>
<evidence type="ECO:0000255" key="1">
    <source>
        <dbReference type="HAMAP-Rule" id="MF_00347"/>
    </source>
</evidence>
<dbReference type="EC" id="2.7.4.1" evidence="1"/>
<dbReference type="EMBL" id="AE000511">
    <property type="protein sequence ID" value="AAD08054.1"/>
    <property type="molecule type" value="Genomic_DNA"/>
</dbReference>
<dbReference type="PIR" id="B64646">
    <property type="entry name" value="B64646"/>
</dbReference>
<dbReference type="RefSeq" id="NP_207800.1">
    <property type="nucleotide sequence ID" value="NC_000915.1"/>
</dbReference>
<dbReference type="RefSeq" id="WP_001078673.1">
    <property type="nucleotide sequence ID" value="NC_018939.1"/>
</dbReference>
<dbReference type="SMR" id="O25654"/>
<dbReference type="DIP" id="DIP-3657N"/>
<dbReference type="FunCoup" id="O25654">
    <property type="interactions" value="191"/>
</dbReference>
<dbReference type="IntAct" id="O25654">
    <property type="interactions" value="2"/>
</dbReference>
<dbReference type="MINT" id="O25654"/>
<dbReference type="STRING" id="85962.HP_1010"/>
<dbReference type="PaxDb" id="85962-C694_05230"/>
<dbReference type="DNASU" id="899545"/>
<dbReference type="EnsemblBacteria" id="AAD08054">
    <property type="protein sequence ID" value="AAD08054"/>
    <property type="gene ID" value="HP_1010"/>
</dbReference>
<dbReference type="KEGG" id="heo:C694_05230"/>
<dbReference type="KEGG" id="hpy:HP_1010"/>
<dbReference type="PATRIC" id="fig|85962.47.peg.1089"/>
<dbReference type="eggNOG" id="COG0855">
    <property type="taxonomic scope" value="Bacteria"/>
</dbReference>
<dbReference type="InParanoid" id="O25654"/>
<dbReference type="OrthoDB" id="9761456at2"/>
<dbReference type="PhylomeDB" id="O25654"/>
<dbReference type="Proteomes" id="UP000000429">
    <property type="component" value="Chromosome"/>
</dbReference>
<dbReference type="GO" id="GO:0016020">
    <property type="term" value="C:membrane"/>
    <property type="evidence" value="ECO:0000318"/>
    <property type="project" value="GO_Central"/>
</dbReference>
<dbReference type="GO" id="GO:0009358">
    <property type="term" value="C:polyphosphate kinase complex"/>
    <property type="evidence" value="ECO:0007669"/>
    <property type="project" value="InterPro"/>
</dbReference>
<dbReference type="GO" id="GO:0005524">
    <property type="term" value="F:ATP binding"/>
    <property type="evidence" value="ECO:0007669"/>
    <property type="project" value="UniProtKB-KW"/>
</dbReference>
<dbReference type="GO" id="GO:0046872">
    <property type="term" value="F:metal ion binding"/>
    <property type="evidence" value="ECO:0007669"/>
    <property type="project" value="UniProtKB-KW"/>
</dbReference>
<dbReference type="GO" id="GO:0008976">
    <property type="term" value="F:polyphosphate kinase activity"/>
    <property type="evidence" value="ECO:0000318"/>
    <property type="project" value="GO_Central"/>
</dbReference>
<dbReference type="GO" id="GO:0006799">
    <property type="term" value="P:polyphosphate biosynthetic process"/>
    <property type="evidence" value="ECO:0000318"/>
    <property type="project" value="GO_Central"/>
</dbReference>
<dbReference type="CDD" id="cd09165">
    <property type="entry name" value="PLDc_PaPPK1_C1_like"/>
    <property type="match status" value="1"/>
</dbReference>
<dbReference type="CDD" id="cd09168">
    <property type="entry name" value="PLDc_PaPPK1_C2_like"/>
    <property type="match status" value="1"/>
</dbReference>
<dbReference type="Gene3D" id="3.30.870.10">
    <property type="entry name" value="Endonuclease Chain A"/>
    <property type="match status" value="2"/>
</dbReference>
<dbReference type="Gene3D" id="3.30.1840.10">
    <property type="entry name" value="Polyphosphate kinase middle domain"/>
    <property type="match status" value="1"/>
</dbReference>
<dbReference type="Gene3D" id="1.20.58.310">
    <property type="entry name" value="Polyphosphate kinase N-terminal domain"/>
    <property type="match status" value="1"/>
</dbReference>
<dbReference type="HAMAP" id="MF_00347">
    <property type="entry name" value="Polyphosphate_kinase"/>
    <property type="match status" value="1"/>
</dbReference>
<dbReference type="InterPro" id="IPR003414">
    <property type="entry name" value="PP_kinase"/>
</dbReference>
<dbReference type="InterPro" id="IPR041108">
    <property type="entry name" value="PP_kinase_C_1"/>
</dbReference>
<dbReference type="InterPro" id="IPR024953">
    <property type="entry name" value="PP_kinase_middle"/>
</dbReference>
<dbReference type="InterPro" id="IPR036830">
    <property type="entry name" value="PP_kinase_middle_dom_sf"/>
</dbReference>
<dbReference type="InterPro" id="IPR025200">
    <property type="entry name" value="PPK_C_dom2"/>
</dbReference>
<dbReference type="InterPro" id="IPR025198">
    <property type="entry name" value="PPK_N_dom"/>
</dbReference>
<dbReference type="InterPro" id="IPR036832">
    <property type="entry name" value="PPK_N_dom_sf"/>
</dbReference>
<dbReference type="NCBIfam" id="TIGR03705">
    <property type="entry name" value="poly_P_kin"/>
    <property type="match status" value="1"/>
</dbReference>
<dbReference type="NCBIfam" id="NF003921">
    <property type="entry name" value="PRK05443.2-2"/>
    <property type="match status" value="1"/>
</dbReference>
<dbReference type="NCBIfam" id="NF003926">
    <property type="entry name" value="PRK05443.3-4"/>
    <property type="match status" value="1"/>
</dbReference>
<dbReference type="PANTHER" id="PTHR30218">
    <property type="entry name" value="POLYPHOSPHATE KINASE"/>
    <property type="match status" value="1"/>
</dbReference>
<dbReference type="PANTHER" id="PTHR30218:SF0">
    <property type="entry name" value="POLYPHOSPHATE KINASE"/>
    <property type="match status" value="1"/>
</dbReference>
<dbReference type="Pfam" id="PF02503">
    <property type="entry name" value="PP_kinase"/>
    <property type="match status" value="1"/>
</dbReference>
<dbReference type="Pfam" id="PF13090">
    <property type="entry name" value="PP_kinase_C"/>
    <property type="match status" value="1"/>
</dbReference>
<dbReference type="Pfam" id="PF17941">
    <property type="entry name" value="PP_kinase_C_1"/>
    <property type="match status" value="1"/>
</dbReference>
<dbReference type="Pfam" id="PF13089">
    <property type="entry name" value="PP_kinase_N"/>
    <property type="match status" value="1"/>
</dbReference>
<dbReference type="PIRSF" id="PIRSF015589">
    <property type="entry name" value="PP_kinase"/>
    <property type="match status" value="1"/>
</dbReference>
<dbReference type="SUPFAM" id="SSF56024">
    <property type="entry name" value="Phospholipase D/nuclease"/>
    <property type="match status" value="2"/>
</dbReference>
<dbReference type="SUPFAM" id="SSF143724">
    <property type="entry name" value="PHP14-like"/>
    <property type="match status" value="1"/>
</dbReference>
<dbReference type="SUPFAM" id="SSF140356">
    <property type="entry name" value="PPK N-terminal domain-like"/>
    <property type="match status" value="1"/>
</dbReference>
<sequence length="675" mass="77991">MNRFFNRELSWLAFNTRVLNEAKDESLPLLERLKFLAIYDTNLDEFYMIRVAGLKQLYEHKIASKGIDGASPEEQLEKIKHYLAHEIEERELEFQKIQALLFKKGLCITPYNELNLEQKAKAKTYFKEQLYALVLPFKLDSSHTFPPLANLTFALFARIKDKETQIISYALIKLPSFIFRFVELEKGLFVLAEEIVEAHLEELFLEHEILDCMAFRVTCDADIAITEDEAHDYADLMSKSLRKRNQGEIVRLQTQKGSQELLKTLLASLRSFQTHSYKKHKLTGMHIYKSAIMLNLGDLWELVNHSDFKALKSPNFTPKIHPHFNENDLFKSIEKQDLLLFHPYESFEPVIDLIEQAASDPATLSIKMTLYRVGKHSPIVKALIEAASKIQVSVLVELKARFDEESNLHWAKALERAGALVVYGVFKLKVHAKMLLITKKTDNQLRHFTHLSTGNYNPLSAKVYTDVSFFSAKNEIANDIIKLFHSLLTSSATNSALETLFMAPKQIKPKIIELIQNEMNHQQEGYIILKANALVDSEIIEWLYQASQKGVKIDLIIRGICCLKPQVKGLSENIRVYSIVGKYLEHARIYYFKHENIYFSSADLMPRNLERRVELLIPATNPKIAHKLLHILEIQLKDTLKRYELNSKGRYIKVSNPNDPLNSQDYFEKQALKTF</sequence>